<protein>
    <recommendedName>
        <fullName evidence="1">Large ribosomal subunit protein uL22</fullName>
    </recommendedName>
    <alternativeName>
        <fullName evidence="2">50S ribosomal protein L22</fullName>
    </alternativeName>
</protein>
<feature type="chain" id="PRO_0000354540" description="Large ribosomal subunit protein uL22">
    <location>
        <begin position="1"/>
        <end position="153"/>
    </location>
</feature>
<comment type="function">
    <text evidence="1">This protein binds specifically to 23S rRNA. It makes multiple contacts with different domains of the 23S rRNA in the assembled 50S subunit and ribosome.</text>
</comment>
<comment type="function">
    <text evidence="1">The globular domain of the protein is located near the polypeptide exit tunnel on the outside of the subunit, while an extended beta-hairpin is found that lines the wall of the exit tunnel in the center of the 70S ribosome.</text>
</comment>
<comment type="subunit">
    <text evidence="1">Part of the 50S ribosomal subunit.</text>
</comment>
<comment type="similarity">
    <text evidence="1">Belongs to the universal ribosomal protein uL22 family.</text>
</comment>
<reference key="1">
    <citation type="submission" date="2007-06" db="EMBL/GenBank/DDBJ databases">
        <title>Complete sequence of Methanococcus aeolicus Nankai-3.</title>
        <authorList>
            <consortium name="US DOE Joint Genome Institute"/>
            <person name="Copeland A."/>
            <person name="Lucas S."/>
            <person name="Lapidus A."/>
            <person name="Barry K."/>
            <person name="Glavina del Rio T."/>
            <person name="Dalin E."/>
            <person name="Tice H."/>
            <person name="Pitluck S."/>
            <person name="Chain P."/>
            <person name="Malfatti S."/>
            <person name="Shin M."/>
            <person name="Vergez L."/>
            <person name="Schmutz J."/>
            <person name="Larimer F."/>
            <person name="Land M."/>
            <person name="Hauser L."/>
            <person name="Kyrpides N."/>
            <person name="Lykidis A."/>
            <person name="Sieprawska-Lupa M."/>
            <person name="Whitman W.B."/>
            <person name="Richardson P."/>
        </authorList>
    </citation>
    <scope>NUCLEOTIDE SEQUENCE [LARGE SCALE GENOMIC DNA]</scope>
    <source>
        <strain>ATCC BAA-1280 / DSM 17508 / OCM 812 / Nankai-3</strain>
    </source>
</reference>
<evidence type="ECO:0000255" key="1">
    <source>
        <dbReference type="HAMAP-Rule" id="MF_01331"/>
    </source>
</evidence>
<evidence type="ECO:0000305" key="2"/>
<accession>A6UWU2</accession>
<sequence length="153" mass="17649">MSKLNYKVETDPNKTARAMGRSLRISRKHTIEICREISGMKLDKAIAYLNRVIELKQVVPFKRHGKDVPHKKGKYGWTAGRFPQKASTQILSVLENAKKNAEYKGMNTEKLRIKHISSNKGFTIKRHMPRAFGRASPKNQETVHVQVILEEFY</sequence>
<organism>
    <name type="scientific">Methanococcus aeolicus (strain ATCC BAA-1280 / DSM 17508 / OCM 812 / Nankai-3)</name>
    <dbReference type="NCBI Taxonomy" id="419665"/>
    <lineage>
        <taxon>Archaea</taxon>
        <taxon>Methanobacteriati</taxon>
        <taxon>Methanobacteriota</taxon>
        <taxon>Methanomada group</taxon>
        <taxon>Methanococci</taxon>
        <taxon>Methanococcales</taxon>
        <taxon>Methanococcaceae</taxon>
        <taxon>Methanococcus</taxon>
    </lineage>
</organism>
<keyword id="KW-0687">Ribonucleoprotein</keyword>
<keyword id="KW-0689">Ribosomal protein</keyword>
<keyword id="KW-0694">RNA-binding</keyword>
<keyword id="KW-0699">rRNA-binding</keyword>
<dbReference type="EMBL" id="CP000743">
    <property type="protein sequence ID" value="ABR56964.1"/>
    <property type="molecule type" value="Genomic_DNA"/>
</dbReference>
<dbReference type="RefSeq" id="WP_011974096.1">
    <property type="nucleotide sequence ID" value="NC_009635.1"/>
</dbReference>
<dbReference type="SMR" id="A6UWU2"/>
<dbReference type="STRING" id="419665.Maeo_1388"/>
<dbReference type="GeneID" id="5326543"/>
<dbReference type="KEGG" id="mae:Maeo_1388"/>
<dbReference type="eggNOG" id="arCOG04098">
    <property type="taxonomic scope" value="Archaea"/>
</dbReference>
<dbReference type="HOGENOM" id="CLU_083987_0_2_2"/>
<dbReference type="OrthoDB" id="314984at2157"/>
<dbReference type="Proteomes" id="UP000001106">
    <property type="component" value="Chromosome"/>
</dbReference>
<dbReference type="GO" id="GO:0022625">
    <property type="term" value="C:cytosolic large ribosomal subunit"/>
    <property type="evidence" value="ECO:0007669"/>
    <property type="project" value="TreeGrafter"/>
</dbReference>
<dbReference type="GO" id="GO:0019843">
    <property type="term" value="F:rRNA binding"/>
    <property type="evidence" value="ECO:0007669"/>
    <property type="project" value="UniProtKB-UniRule"/>
</dbReference>
<dbReference type="GO" id="GO:0003735">
    <property type="term" value="F:structural constituent of ribosome"/>
    <property type="evidence" value="ECO:0007669"/>
    <property type="project" value="InterPro"/>
</dbReference>
<dbReference type="GO" id="GO:0002181">
    <property type="term" value="P:cytoplasmic translation"/>
    <property type="evidence" value="ECO:0007669"/>
    <property type="project" value="TreeGrafter"/>
</dbReference>
<dbReference type="CDD" id="cd00336">
    <property type="entry name" value="Ribosomal_L22"/>
    <property type="match status" value="1"/>
</dbReference>
<dbReference type="FunFam" id="3.90.470.10:FF:000015">
    <property type="entry name" value="50S ribosomal protein L22"/>
    <property type="match status" value="1"/>
</dbReference>
<dbReference type="Gene3D" id="3.90.470.10">
    <property type="entry name" value="Ribosomal protein L22/L17"/>
    <property type="match status" value="1"/>
</dbReference>
<dbReference type="HAMAP" id="MF_01331_A">
    <property type="entry name" value="Ribosomal_uL22_A"/>
    <property type="match status" value="1"/>
</dbReference>
<dbReference type="InterPro" id="IPR001063">
    <property type="entry name" value="Ribosomal_uL22"/>
</dbReference>
<dbReference type="InterPro" id="IPR018260">
    <property type="entry name" value="Ribosomal_uL22_CS"/>
</dbReference>
<dbReference type="InterPro" id="IPR005721">
    <property type="entry name" value="Ribosomal_uL22_euk/arc"/>
</dbReference>
<dbReference type="InterPro" id="IPR036394">
    <property type="entry name" value="Ribosomal_uL22_sf"/>
</dbReference>
<dbReference type="NCBIfam" id="NF003260">
    <property type="entry name" value="PRK04223.1"/>
    <property type="match status" value="1"/>
</dbReference>
<dbReference type="NCBIfam" id="TIGR01038">
    <property type="entry name" value="uL22_arch_euk"/>
    <property type="match status" value="1"/>
</dbReference>
<dbReference type="PANTHER" id="PTHR11593">
    <property type="entry name" value="60S RIBOSOMAL PROTEIN L17"/>
    <property type="match status" value="1"/>
</dbReference>
<dbReference type="PANTHER" id="PTHR11593:SF10">
    <property type="entry name" value="60S RIBOSOMAL PROTEIN L17"/>
    <property type="match status" value="1"/>
</dbReference>
<dbReference type="Pfam" id="PF00237">
    <property type="entry name" value="Ribosomal_L22"/>
    <property type="match status" value="1"/>
</dbReference>
<dbReference type="SUPFAM" id="SSF54843">
    <property type="entry name" value="Ribosomal protein L22"/>
    <property type="match status" value="1"/>
</dbReference>
<dbReference type="PROSITE" id="PS00464">
    <property type="entry name" value="RIBOSOMAL_L22"/>
    <property type="match status" value="1"/>
</dbReference>
<gene>
    <name evidence="1" type="primary">rpl22</name>
    <name type="ordered locus">Maeo_1388</name>
</gene>
<name>RL22_META3</name>
<proteinExistence type="inferred from homology"/>